<accession>B8ZSH2</accession>
<feature type="chain" id="PRO_1000117644" description="Serine hydroxymethyltransferase">
    <location>
        <begin position="1"/>
        <end position="426"/>
    </location>
</feature>
<feature type="binding site" evidence="1">
    <location>
        <position position="118"/>
    </location>
    <ligand>
        <name>(6S)-5,6,7,8-tetrahydrofolate</name>
        <dbReference type="ChEBI" id="CHEBI:57453"/>
    </ligand>
</feature>
<feature type="binding site" evidence="1">
    <location>
        <begin position="122"/>
        <end position="124"/>
    </location>
    <ligand>
        <name>(6S)-5,6,7,8-tetrahydrofolate</name>
        <dbReference type="ChEBI" id="CHEBI:57453"/>
    </ligand>
</feature>
<feature type="site" description="Plays an important role in substrate specificity" evidence="1">
    <location>
        <position position="226"/>
    </location>
</feature>
<feature type="modified residue" description="N6-(pyridoxal phosphate)lysine" evidence="1">
    <location>
        <position position="227"/>
    </location>
</feature>
<evidence type="ECO:0000255" key="1">
    <source>
        <dbReference type="HAMAP-Rule" id="MF_00051"/>
    </source>
</evidence>
<comment type="function">
    <text evidence="1">Catalyzes the reversible interconversion of serine and glycine with tetrahydrofolate (THF) serving as the one-carbon carrier. This reaction serves as the major source of one-carbon groups required for the biosynthesis of purines, thymidylate, methionine, and other important biomolecules. Also exhibits THF-independent aldolase activity toward beta-hydroxyamino acids, producing glycine and aldehydes, via a retro-aldol mechanism.</text>
</comment>
<comment type="catalytic activity">
    <reaction evidence="1">
        <text>(6R)-5,10-methylene-5,6,7,8-tetrahydrofolate + glycine + H2O = (6S)-5,6,7,8-tetrahydrofolate + L-serine</text>
        <dbReference type="Rhea" id="RHEA:15481"/>
        <dbReference type="ChEBI" id="CHEBI:15377"/>
        <dbReference type="ChEBI" id="CHEBI:15636"/>
        <dbReference type="ChEBI" id="CHEBI:33384"/>
        <dbReference type="ChEBI" id="CHEBI:57305"/>
        <dbReference type="ChEBI" id="CHEBI:57453"/>
        <dbReference type="EC" id="2.1.2.1"/>
    </reaction>
</comment>
<comment type="cofactor">
    <cofactor evidence="1">
        <name>pyridoxal 5'-phosphate</name>
        <dbReference type="ChEBI" id="CHEBI:597326"/>
    </cofactor>
</comment>
<comment type="pathway">
    <text evidence="1">One-carbon metabolism; tetrahydrofolate interconversion.</text>
</comment>
<comment type="pathway">
    <text evidence="1">Amino-acid biosynthesis; glycine biosynthesis; glycine from L-serine: step 1/1.</text>
</comment>
<comment type="subunit">
    <text evidence="1">Homodimer.</text>
</comment>
<comment type="subcellular location">
    <subcellularLocation>
        <location evidence="1">Cytoplasm</location>
    </subcellularLocation>
</comment>
<comment type="similarity">
    <text evidence="1">Belongs to the SHMT family.</text>
</comment>
<name>GLYA_MYCLB</name>
<sequence>MVAPLAEVDPDIAELLGKELGRQRDTLEMIASENFVPRSVLQAQGSVLTNKYAEGLPGRRYYDGCEHVDVVENIARDRAKALFGADFANVQPHSGAQANAAVLHALMSPGERLLGLDLANGGHLTHGMRLNFSGKLYETGFYGVDATTHLIDMDAVRAKALEFRPKVLIAGWSAYPRILDFAAFRSIADEVGAKLWVDMAHFAGLVAVGLHPSPVPHADVVSTTVHKTLGGGRSGLILGKQEFATAINSAVFPGQQGGPLMHVIAGKAVALKIATTPEFTDRQQRTLAGARILADRLTAADVTKAGVSVVSGGTDVHLVLVDLRNSPFDGQAAEDLLHEVGITVNRNVVPNDPRPPMVTSGLRIGTPALATRGFGEAEFTEVADIIATVLTTGGSVDVAALRQQVTRLARDFPLYGGLEDWSLAGR</sequence>
<protein>
    <recommendedName>
        <fullName evidence="1">Serine hydroxymethyltransferase</fullName>
        <shortName evidence="1">SHMT</shortName>
        <shortName evidence="1">Serine methylase</shortName>
        <ecNumber evidence="1">2.1.2.1</ecNumber>
    </recommendedName>
</protein>
<proteinExistence type="inferred from homology"/>
<keyword id="KW-0028">Amino-acid biosynthesis</keyword>
<keyword id="KW-0963">Cytoplasm</keyword>
<keyword id="KW-0554">One-carbon metabolism</keyword>
<keyword id="KW-0663">Pyridoxal phosphate</keyword>
<keyword id="KW-0808">Transferase</keyword>
<dbReference type="EC" id="2.1.2.1" evidence="1"/>
<dbReference type="EMBL" id="FM211192">
    <property type="protein sequence ID" value="CAR72050.1"/>
    <property type="molecule type" value="Genomic_DNA"/>
</dbReference>
<dbReference type="SMR" id="B8ZSH2"/>
<dbReference type="KEGG" id="mlb:MLBr01953"/>
<dbReference type="HOGENOM" id="CLU_022477_2_1_11"/>
<dbReference type="UniPathway" id="UPA00193"/>
<dbReference type="UniPathway" id="UPA00288">
    <property type="reaction ID" value="UER01023"/>
</dbReference>
<dbReference type="Proteomes" id="UP000006900">
    <property type="component" value="Chromosome"/>
</dbReference>
<dbReference type="GO" id="GO:0005829">
    <property type="term" value="C:cytosol"/>
    <property type="evidence" value="ECO:0007669"/>
    <property type="project" value="TreeGrafter"/>
</dbReference>
<dbReference type="GO" id="GO:0004372">
    <property type="term" value="F:glycine hydroxymethyltransferase activity"/>
    <property type="evidence" value="ECO:0007669"/>
    <property type="project" value="UniProtKB-UniRule"/>
</dbReference>
<dbReference type="GO" id="GO:0030170">
    <property type="term" value="F:pyridoxal phosphate binding"/>
    <property type="evidence" value="ECO:0007669"/>
    <property type="project" value="UniProtKB-UniRule"/>
</dbReference>
<dbReference type="GO" id="GO:0019264">
    <property type="term" value="P:glycine biosynthetic process from serine"/>
    <property type="evidence" value="ECO:0007669"/>
    <property type="project" value="UniProtKB-UniRule"/>
</dbReference>
<dbReference type="GO" id="GO:0035999">
    <property type="term" value="P:tetrahydrofolate interconversion"/>
    <property type="evidence" value="ECO:0007669"/>
    <property type="project" value="UniProtKB-UniRule"/>
</dbReference>
<dbReference type="CDD" id="cd00378">
    <property type="entry name" value="SHMT"/>
    <property type="match status" value="1"/>
</dbReference>
<dbReference type="FunFam" id="3.40.640.10:FF:000001">
    <property type="entry name" value="Serine hydroxymethyltransferase"/>
    <property type="match status" value="1"/>
</dbReference>
<dbReference type="Gene3D" id="3.90.1150.10">
    <property type="entry name" value="Aspartate Aminotransferase, domain 1"/>
    <property type="match status" value="1"/>
</dbReference>
<dbReference type="Gene3D" id="3.40.640.10">
    <property type="entry name" value="Type I PLP-dependent aspartate aminotransferase-like (Major domain)"/>
    <property type="match status" value="1"/>
</dbReference>
<dbReference type="HAMAP" id="MF_00051">
    <property type="entry name" value="SHMT"/>
    <property type="match status" value="1"/>
</dbReference>
<dbReference type="InterPro" id="IPR015424">
    <property type="entry name" value="PyrdxlP-dep_Trfase"/>
</dbReference>
<dbReference type="InterPro" id="IPR015421">
    <property type="entry name" value="PyrdxlP-dep_Trfase_major"/>
</dbReference>
<dbReference type="InterPro" id="IPR015422">
    <property type="entry name" value="PyrdxlP-dep_Trfase_small"/>
</dbReference>
<dbReference type="InterPro" id="IPR001085">
    <property type="entry name" value="Ser_HO-MeTrfase"/>
</dbReference>
<dbReference type="InterPro" id="IPR049943">
    <property type="entry name" value="Ser_HO-MeTrfase-like"/>
</dbReference>
<dbReference type="InterPro" id="IPR019798">
    <property type="entry name" value="Ser_HO-MeTrfase_PLP_BS"/>
</dbReference>
<dbReference type="InterPro" id="IPR039429">
    <property type="entry name" value="SHMT-like_dom"/>
</dbReference>
<dbReference type="NCBIfam" id="NF000586">
    <property type="entry name" value="PRK00011.1"/>
    <property type="match status" value="1"/>
</dbReference>
<dbReference type="PANTHER" id="PTHR11680">
    <property type="entry name" value="SERINE HYDROXYMETHYLTRANSFERASE"/>
    <property type="match status" value="1"/>
</dbReference>
<dbReference type="PANTHER" id="PTHR11680:SF35">
    <property type="entry name" value="SERINE HYDROXYMETHYLTRANSFERASE 1"/>
    <property type="match status" value="1"/>
</dbReference>
<dbReference type="Pfam" id="PF00464">
    <property type="entry name" value="SHMT"/>
    <property type="match status" value="1"/>
</dbReference>
<dbReference type="PIRSF" id="PIRSF000412">
    <property type="entry name" value="SHMT"/>
    <property type="match status" value="1"/>
</dbReference>
<dbReference type="SUPFAM" id="SSF53383">
    <property type="entry name" value="PLP-dependent transferases"/>
    <property type="match status" value="1"/>
</dbReference>
<dbReference type="PROSITE" id="PS00096">
    <property type="entry name" value="SHMT"/>
    <property type="match status" value="1"/>
</dbReference>
<reference key="1">
    <citation type="journal article" date="2009" name="Nat. Genet.">
        <title>Comparative genomic and phylogeographic analysis of Mycobacterium leprae.</title>
        <authorList>
            <person name="Monot M."/>
            <person name="Honore N."/>
            <person name="Garnier T."/>
            <person name="Zidane N."/>
            <person name="Sherafi D."/>
            <person name="Paniz-Mondolfi A."/>
            <person name="Matsuoka M."/>
            <person name="Taylor G.M."/>
            <person name="Donoghue H.D."/>
            <person name="Bouwman A."/>
            <person name="Mays S."/>
            <person name="Watson C."/>
            <person name="Lockwood D."/>
            <person name="Khamispour A."/>
            <person name="Dowlati Y."/>
            <person name="Jianping S."/>
            <person name="Rea T.H."/>
            <person name="Vera-Cabrera L."/>
            <person name="Stefani M.M."/>
            <person name="Banu S."/>
            <person name="Macdonald M."/>
            <person name="Sapkota B.R."/>
            <person name="Spencer J.S."/>
            <person name="Thomas J."/>
            <person name="Harshman K."/>
            <person name="Singh P."/>
            <person name="Busso P."/>
            <person name="Gattiker A."/>
            <person name="Rougemont J."/>
            <person name="Brennan P.J."/>
            <person name="Cole S.T."/>
        </authorList>
    </citation>
    <scope>NUCLEOTIDE SEQUENCE [LARGE SCALE GENOMIC DNA]</scope>
    <source>
        <strain>Br4923</strain>
    </source>
</reference>
<organism>
    <name type="scientific">Mycobacterium leprae (strain Br4923)</name>
    <dbReference type="NCBI Taxonomy" id="561304"/>
    <lineage>
        <taxon>Bacteria</taxon>
        <taxon>Bacillati</taxon>
        <taxon>Actinomycetota</taxon>
        <taxon>Actinomycetes</taxon>
        <taxon>Mycobacteriales</taxon>
        <taxon>Mycobacteriaceae</taxon>
        <taxon>Mycobacterium</taxon>
    </lineage>
</organism>
<gene>
    <name evidence="1" type="primary">glyA</name>
    <name type="ordered locus">MLBr01953</name>
</gene>